<gene>
    <name type="primary">expR</name>
    <name type="ordered locus">Dda3937_03218</name>
</gene>
<protein>
    <recommendedName>
        <fullName>Transcriptional activator protein ExpR</fullName>
    </recommendedName>
</protein>
<reference key="1">
    <citation type="journal article" date="1998" name="Mol. Microbiol.">
        <title>Characterization of the Erwinia chrysanthemi expI-expR locus directing the synthesis of two N-acyl-homoserine lactone signal molecules.</title>
        <authorList>
            <person name="Nasser W."/>
            <person name="Bouillant M.L."/>
            <person name="Salmond G."/>
            <person name="Reverchon S."/>
        </authorList>
    </citation>
    <scope>NUCLEOTIDE SEQUENCE [GENOMIC DNA]</scope>
    <source>
        <strain>3937</strain>
    </source>
</reference>
<reference key="2">
    <citation type="journal article" date="2011" name="J. Bacteriol.">
        <title>Genome sequence of the plant-pathogenic bacterium Dickeya dadantii 3937.</title>
        <authorList>
            <person name="Glasner J.D."/>
            <person name="Yang C.H."/>
            <person name="Reverchon S."/>
            <person name="Hugouvieux-Cotte-Pattat N."/>
            <person name="Condemine G."/>
            <person name="Bohin J.P."/>
            <person name="Van Gijsegem F."/>
            <person name="Yang S."/>
            <person name="Franza T."/>
            <person name="Expert D."/>
            <person name="Plunkett G. III"/>
            <person name="San Francisco M.J."/>
            <person name="Charkowski A.O."/>
            <person name="Py B."/>
            <person name="Bell K."/>
            <person name="Rauscher L."/>
            <person name="Rodriguez-Palenzuela P."/>
            <person name="Toussaint A."/>
            <person name="Holeva M.C."/>
            <person name="He S.Y."/>
            <person name="Douet V."/>
            <person name="Boccara M."/>
            <person name="Blanco C."/>
            <person name="Toth I."/>
            <person name="Anderson B.D."/>
            <person name="Biehl B.S."/>
            <person name="Mau B."/>
            <person name="Flynn S.M."/>
            <person name="Barras F."/>
            <person name="Lindeberg M."/>
            <person name="Birch P.R."/>
            <person name="Tsuyumu S."/>
            <person name="Shi X."/>
            <person name="Hibbing M."/>
            <person name="Yap M.N."/>
            <person name="Carpentier M."/>
            <person name="Dassa E."/>
            <person name="Umehara M."/>
            <person name="Kim J.F."/>
            <person name="Rusch M."/>
            <person name="Soni P."/>
            <person name="Mayhew G.F."/>
            <person name="Fouts D.E."/>
            <person name="Gill S.R."/>
            <person name="Blattner F.R."/>
            <person name="Keen N.T."/>
            <person name="Perna N.T."/>
        </authorList>
    </citation>
    <scope>NUCLEOTIDE SEQUENCE [LARGE SCALE GENOMIC DNA]</scope>
    <source>
        <strain>3937</strain>
    </source>
</reference>
<evidence type="ECO:0000255" key="1">
    <source>
        <dbReference type="PROSITE-ProRule" id="PRU00411"/>
    </source>
</evidence>
<evidence type="ECO:0000305" key="2"/>
<feature type="chain" id="PRO_0000184153" description="Transcriptional activator protein ExpR">
    <location>
        <begin position="1"/>
        <end position="250"/>
    </location>
</feature>
<feature type="domain" description="HTH luxR-type" evidence="1">
    <location>
        <begin position="173"/>
        <end position="238"/>
    </location>
</feature>
<feature type="DNA-binding region" description="H-T-H motif" evidence="1">
    <location>
        <begin position="197"/>
        <end position="216"/>
    </location>
</feature>
<feature type="sequence conflict" description="In Ref. 1; CAA65307." evidence="2" ref="1">
    <original>D</original>
    <variation>S</variation>
    <location>
        <position position="116"/>
    </location>
</feature>
<name>EXPR_DICD3</name>
<dbReference type="EMBL" id="X96440">
    <property type="protein sequence ID" value="CAA65307.1"/>
    <property type="molecule type" value="Genomic_DNA"/>
</dbReference>
<dbReference type="EMBL" id="CP002038">
    <property type="protein sequence ID" value="ADN00586.1"/>
    <property type="molecule type" value="Genomic_DNA"/>
</dbReference>
<dbReference type="RefSeq" id="WP_013319981.1">
    <property type="nucleotide sequence ID" value="NC_014500.1"/>
</dbReference>
<dbReference type="SMR" id="Q47188"/>
<dbReference type="STRING" id="198628.Dda3937_03218"/>
<dbReference type="KEGG" id="ddd:Dda3937_03218"/>
<dbReference type="PATRIC" id="fig|198628.6.peg.4339"/>
<dbReference type="eggNOG" id="COG2771">
    <property type="taxonomic scope" value="Bacteria"/>
</dbReference>
<dbReference type="HOGENOM" id="CLU_072786_5_0_6"/>
<dbReference type="OrthoDB" id="9774661at2"/>
<dbReference type="Proteomes" id="UP000006859">
    <property type="component" value="Chromosome"/>
</dbReference>
<dbReference type="GO" id="GO:0003677">
    <property type="term" value="F:DNA binding"/>
    <property type="evidence" value="ECO:0007669"/>
    <property type="project" value="UniProtKB-KW"/>
</dbReference>
<dbReference type="GO" id="GO:0009372">
    <property type="term" value="P:quorum sensing"/>
    <property type="evidence" value="ECO:0007669"/>
    <property type="project" value="UniProtKB-KW"/>
</dbReference>
<dbReference type="GO" id="GO:0006355">
    <property type="term" value="P:regulation of DNA-templated transcription"/>
    <property type="evidence" value="ECO:0007669"/>
    <property type="project" value="InterPro"/>
</dbReference>
<dbReference type="CDD" id="cd06170">
    <property type="entry name" value="LuxR_C_like"/>
    <property type="match status" value="1"/>
</dbReference>
<dbReference type="Gene3D" id="3.30.450.80">
    <property type="entry name" value="Transcription factor LuxR-like, autoinducer-binding domain"/>
    <property type="match status" value="1"/>
</dbReference>
<dbReference type="Gene3D" id="1.10.10.10">
    <property type="entry name" value="Winged helix-like DNA-binding domain superfamily/Winged helix DNA-binding domain"/>
    <property type="match status" value="1"/>
</dbReference>
<dbReference type="InterPro" id="IPR016032">
    <property type="entry name" value="Sig_transdc_resp-reg_C-effctor"/>
</dbReference>
<dbReference type="InterPro" id="IPR005143">
    <property type="entry name" value="TF_LuxR_autoind-bd_dom"/>
</dbReference>
<dbReference type="InterPro" id="IPR036693">
    <property type="entry name" value="TF_LuxR_autoind-bd_dom_sf"/>
</dbReference>
<dbReference type="InterPro" id="IPR000792">
    <property type="entry name" value="Tscrpt_reg_LuxR_C"/>
</dbReference>
<dbReference type="InterPro" id="IPR036388">
    <property type="entry name" value="WH-like_DNA-bd_sf"/>
</dbReference>
<dbReference type="PANTHER" id="PTHR44688">
    <property type="entry name" value="DNA-BINDING TRANSCRIPTIONAL ACTIVATOR DEVR_DOSR"/>
    <property type="match status" value="1"/>
</dbReference>
<dbReference type="PANTHER" id="PTHR44688:SF16">
    <property type="entry name" value="DNA-BINDING TRANSCRIPTIONAL ACTIVATOR DEVR_DOSR"/>
    <property type="match status" value="1"/>
</dbReference>
<dbReference type="Pfam" id="PF03472">
    <property type="entry name" value="Autoind_bind"/>
    <property type="match status" value="1"/>
</dbReference>
<dbReference type="Pfam" id="PF00196">
    <property type="entry name" value="GerE"/>
    <property type="match status" value="1"/>
</dbReference>
<dbReference type="PRINTS" id="PR00038">
    <property type="entry name" value="HTHLUXR"/>
</dbReference>
<dbReference type="SMART" id="SM00421">
    <property type="entry name" value="HTH_LUXR"/>
    <property type="match status" value="1"/>
</dbReference>
<dbReference type="SUPFAM" id="SSF46894">
    <property type="entry name" value="C-terminal effector domain of the bipartite response regulators"/>
    <property type="match status" value="1"/>
</dbReference>
<dbReference type="SUPFAM" id="SSF75516">
    <property type="entry name" value="Pheromone-binding domain of LuxR-like quorum-sensing transcription factors"/>
    <property type="match status" value="1"/>
</dbReference>
<dbReference type="PROSITE" id="PS00622">
    <property type="entry name" value="HTH_LUXR_1"/>
    <property type="match status" value="1"/>
</dbReference>
<dbReference type="PROSITE" id="PS50043">
    <property type="entry name" value="HTH_LUXR_2"/>
    <property type="match status" value="1"/>
</dbReference>
<sequence length="250" mass="28716">MSISFSNVDFINSTIQSYLNRKLKSYGDPKYAYLIMNKKKPTDVVIISNYPTEWVDIYRNNNYQHIDPVILTAINKISPFSWDDDLVISSKLKFSRIFNLSKDYDIVNGYTFVLHDPGNNLAALSFMIEEHRSEELEEIIQNNKDKLQMLLISAHEKLTSLYREMSRNRNNSKSQEADLFSQRENEILHWASMGKTYQEIALILGITTSTVKFHIGNVVKKLGVLNAKHAIRLGVEMNLIKPVGPAKARS</sequence>
<proteinExistence type="inferred from homology"/>
<organism>
    <name type="scientific">Dickeya dadantii (strain 3937)</name>
    <name type="common">Erwinia chrysanthemi (strain 3937)</name>
    <dbReference type="NCBI Taxonomy" id="198628"/>
    <lineage>
        <taxon>Bacteria</taxon>
        <taxon>Pseudomonadati</taxon>
        <taxon>Pseudomonadota</taxon>
        <taxon>Gammaproteobacteria</taxon>
        <taxon>Enterobacterales</taxon>
        <taxon>Pectobacteriaceae</taxon>
        <taxon>Dickeya</taxon>
    </lineage>
</organism>
<accession>Q47188</accession>
<accession>E0SME7</accession>
<keyword id="KW-0010">Activator</keyword>
<keyword id="KW-0238">DNA-binding</keyword>
<keyword id="KW-0673">Quorum sensing</keyword>
<keyword id="KW-1185">Reference proteome</keyword>
<keyword id="KW-0804">Transcription</keyword>
<keyword id="KW-0805">Transcription regulation</keyword>
<keyword id="KW-0843">Virulence</keyword>
<comment type="function">
    <text>Functions as an OHLL responsive transcriptional regulator that acts in virulence (soft rot disease) through the activation of genes for plant tissue macerating enzymes.</text>
</comment>
<comment type="similarity">
    <text evidence="2">Belongs to the autoinducer-regulated transcriptional regulatory protein family.</text>
</comment>